<sequence>MHNQTVRATVFKANAAAPQTKQIYEDDFSELYGEDIIAPPYNIIELKTIAEYSTILQQCIDAYRVNITGFGFDVEYTFDVNASDVDQAKKKRAEKDWARLEAFYKCLHFDESAEMILGYAIEDREKTGNGFMEVLRDGAGKPAGIEYLDVKYMRVCGAGEPVEVSFVYEENGKMKRIKRQKRFRKYVQMINGKKVFFKEYGDPRKMDIRTGEYVNTLAEKYQANEAIHLKIGSGVYGVPRWIGNIVNLYGARKAEELNFMYFKQGRHVPAAITVENGMLSEASYRELQEYMNDLEGVENAHKFLLIEAEGIAKEKDLHGGEDITPVSVEIKSLAEILQNDALFLEYDEKSRNKLRSAFRLPPLYTGEAQEYNRATADTARKITEEQVFQPERKTLVNKLNTLLLPELNIHDVRLTLKGPDFRDPLEIAKVLGPFITAGAVSPNDLRDLAGRVLGKTLEEWPEDIYKRPAGQDAEKTNLAALMQELKESIEDIKTS</sequence>
<proteinExistence type="inferred from homology"/>
<dbReference type="EMBL" id="Z70177">
    <property type="protein sequence ID" value="CAA94060.1"/>
    <property type="molecule type" value="Genomic_DNA"/>
</dbReference>
<dbReference type="EMBL" id="AL009126">
    <property type="protein sequence ID" value="CAB13116.2"/>
    <property type="molecule type" value="Genomic_DNA"/>
</dbReference>
<dbReference type="PIR" id="E69731">
    <property type="entry name" value="E69731"/>
</dbReference>
<dbReference type="RefSeq" id="NP_389141.2">
    <property type="nucleotide sequence ID" value="NC_000964.3"/>
</dbReference>
<dbReference type="RefSeq" id="WP_003245427.1">
    <property type="nucleotide sequence ID" value="NZ_OZ025638.1"/>
</dbReference>
<dbReference type="FunCoup" id="P54325">
    <property type="interactions" value="38"/>
</dbReference>
<dbReference type="STRING" id="224308.BSU12590"/>
<dbReference type="PaxDb" id="224308-BSU12590"/>
<dbReference type="EnsemblBacteria" id="CAB13116">
    <property type="protein sequence ID" value="CAB13116"/>
    <property type="gene ID" value="BSU_12590"/>
</dbReference>
<dbReference type="GeneID" id="936471"/>
<dbReference type="KEGG" id="bsu:BSU12590"/>
<dbReference type="PATRIC" id="fig|224308.179.peg.1363"/>
<dbReference type="eggNOG" id="COG5518">
    <property type="taxonomic scope" value="Bacteria"/>
</dbReference>
<dbReference type="InParanoid" id="P54325"/>
<dbReference type="OrthoDB" id="2756373at2"/>
<dbReference type="BioCyc" id="BSUB:BSU12590-MONOMER"/>
<dbReference type="Proteomes" id="UP000001570">
    <property type="component" value="Chromosome"/>
</dbReference>
<dbReference type="InterPro" id="IPR016753">
    <property type="entry name" value="PBSX_Firmicutes"/>
</dbReference>
<dbReference type="InterPro" id="IPR006944">
    <property type="entry name" value="Phage/GTA_portal"/>
</dbReference>
<dbReference type="InterPro" id="IPR006430">
    <property type="entry name" value="Phage_portal_PBSX"/>
</dbReference>
<dbReference type="NCBIfam" id="TIGR01540">
    <property type="entry name" value="portal_PBSX"/>
    <property type="match status" value="1"/>
</dbReference>
<dbReference type="Pfam" id="PF04860">
    <property type="entry name" value="Phage_portal"/>
    <property type="match status" value="1"/>
</dbReference>
<dbReference type="PIRSF" id="PIRSF019260">
    <property type="entry name" value="PBSX_XkdE_prd"/>
    <property type="match status" value="1"/>
</dbReference>
<gene>
    <name type="primary">xkdE</name>
    <name type="ordered locus">BSU12590</name>
</gene>
<comment type="similarity">
    <text evidence="1">Belongs to the phage portal family. PBSX subfamily.</text>
</comment>
<name>XKDE_BACSU</name>
<organism>
    <name type="scientific">Bacillus subtilis (strain 168)</name>
    <dbReference type="NCBI Taxonomy" id="224308"/>
    <lineage>
        <taxon>Bacteria</taxon>
        <taxon>Bacillati</taxon>
        <taxon>Bacillota</taxon>
        <taxon>Bacilli</taxon>
        <taxon>Bacillales</taxon>
        <taxon>Bacillaceae</taxon>
        <taxon>Bacillus</taxon>
    </lineage>
</organism>
<feature type="chain" id="PRO_0000066019" description="Phage-like element PBSX protein XkdE">
    <location>
        <begin position="1"/>
        <end position="495"/>
    </location>
</feature>
<feature type="sequence conflict" description="In Ref. 1; CAA94060." evidence="1" ref="1">
    <original>G</original>
    <variation>S</variation>
    <location>
        <position position="296"/>
    </location>
</feature>
<protein>
    <recommendedName>
        <fullName>Phage-like element PBSX protein XkdE</fullName>
    </recommendedName>
</protein>
<reference key="1">
    <citation type="submission" date="1996-03" db="EMBL/GenBank/DDBJ databases">
        <authorList>
            <person name="Krogh S."/>
            <person name="O'Reilly M."/>
            <person name="Nolan N."/>
            <person name="Devine K.M."/>
        </authorList>
    </citation>
    <scope>NUCLEOTIDE SEQUENCE [GENOMIC DNA]</scope>
    <source>
        <strain>168</strain>
    </source>
</reference>
<reference key="2">
    <citation type="journal article" date="1997" name="Nature">
        <title>The complete genome sequence of the Gram-positive bacterium Bacillus subtilis.</title>
        <authorList>
            <person name="Kunst F."/>
            <person name="Ogasawara N."/>
            <person name="Moszer I."/>
            <person name="Albertini A.M."/>
            <person name="Alloni G."/>
            <person name="Azevedo V."/>
            <person name="Bertero M.G."/>
            <person name="Bessieres P."/>
            <person name="Bolotin A."/>
            <person name="Borchert S."/>
            <person name="Borriss R."/>
            <person name="Boursier L."/>
            <person name="Brans A."/>
            <person name="Braun M."/>
            <person name="Brignell S.C."/>
            <person name="Bron S."/>
            <person name="Brouillet S."/>
            <person name="Bruschi C.V."/>
            <person name="Caldwell B."/>
            <person name="Capuano V."/>
            <person name="Carter N.M."/>
            <person name="Choi S.-K."/>
            <person name="Codani J.-J."/>
            <person name="Connerton I.F."/>
            <person name="Cummings N.J."/>
            <person name="Daniel R.A."/>
            <person name="Denizot F."/>
            <person name="Devine K.M."/>
            <person name="Duesterhoeft A."/>
            <person name="Ehrlich S.D."/>
            <person name="Emmerson P.T."/>
            <person name="Entian K.-D."/>
            <person name="Errington J."/>
            <person name="Fabret C."/>
            <person name="Ferrari E."/>
            <person name="Foulger D."/>
            <person name="Fritz C."/>
            <person name="Fujita M."/>
            <person name="Fujita Y."/>
            <person name="Fuma S."/>
            <person name="Galizzi A."/>
            <person name="Galleron N."/>
            <person name="Ghim S.-Y."/>
            <person name="Glaser P."/>
            <person name="Goffeau A."/>
            <person name="Golightly E.J."/>
            <person name="Grandi G."/>
            <person name="Guiseppi G."/>
            <person name="Guy B.J."/>
            <person name="Haga K."/>
            <person name="Haiech J."/>
            <person name="Harwood C.R."/>
            <person name="Henaut A."/>
            <person name="Hilbert H."/>
            <person name="Holsappel S."/>
            <person name="Hosono S."/>
            <person name="Hullo M.-F."/>
            <person name="Itaya M."/>
            <person name="Jones L.-M."/>
            <person name="Joris B."/>
            <person name="Karamata D."/>
            <person name="Kasahara Y."/>
            <person name="Klaerr-Blanchard M."/>
            <person name="Klein C."/>
            <person name="Kobayashi Y."/>
            <person name="Koetter P."/>
            <person name="Koningstein G."/>
            <person name="Krogh S."/>
            <person name="Kumano M."/>
            <person name="Kurita K."/>
            <person name="Lapidus A."/>
            <person name="Lardinois S."/>
            <person name="Lauber J."/>
            <person name="Lazarevic V."/>
            <person name="Lee S.-M."/>
            <person name="Levine A."/>
            <person name="Liu H."/>
            <person name="Masuda S."/>
            <person name="Mauel C."/>
            <person name="Medigue C."/>
            <person name="Medina N."/>
            <person name="Mellado R.P."/>
            <person name="Mizuno M."/>
            <person name="Moestl D."/>
            <person name="Nakai S."/>
            <person name="Noback M."/>
            <person name="Noone D."/>
            <person name="O'Reilly M."/>
            <person name="Ogawa K."/>
            <person name="Ogiwara A."/>
            <person name="Oudega B."/>
            <person name="Park S.-H."/>
            <person name="Parro V."/>
            <person name="Pohl T.M."/>
            <person name="Portetelle D."/>
            <person name="Porwollik S."/>
            <person name="Prescott A.M."/>
            <person name="Presecan E."/>
            <person name="Pujic P."/>
            <person name="Purnelle B."/>
            <person name="Rapoport G."/>
            <person name="Rey M."/>
            <person name="Reynolds S."/>
            <person name="Rieger M."/>
            <person name="Rivolta C."/>
            <person name="Rocha E."/>
            <person name="Roche B."/>
            <person name="Rose M."/>
            <person name="Sadaie Y."/>
            <person name="Sato T."/>
            <person name="Scanlan E."/>
            <person name="Schleich S."/>
            <person name="Schroeter R."/>
            <person name="Scoffone F."/>
            <person name="Sekiguchi J."/>
            <person name="Sekowska A."/>
            <person name="Seror S.J."/>
            <person name="Serror P."/>
            <person name="Shin B.-S."/>
            <person name="Soldo B."/>
            <person name="Sorokin A."/>
            <person name="Tacconi E."/>
            <person name="Takagi T."/>
            <person name="Takahashi H."/>
            <person name="Takemaru K."/>
            <person name="Takeuchi M."/>
            <person name="Tamakoshi A."/>
            <person name="Tanaka T."/>
            <person name="Terpstra P."/>
            <person name="Tognoni A."/>
            <person name="Tosato V."/>
            <person name="Uchiyama S."/>
            <person name="Vandenbol M."/>
            <person name="Vannier F."/>
            <person name="Vassarotti A."/>
            <person name="Viari A."/>
            <person name="Wambutt R."/>
            <person name="Wedler E."/>
            <person name="Wedler H."/>
            <person name="Weitzenegger T."/>
            <person name="Winters P."/>
            <person name="Wipat A."/>
            <person name="Yamamoto H."/>
            <person name="Yamane K."/>
            <person name="Yasumoto K."/>
            <person name="Yata K."/>
            <person name="Yoshida K."/>
            <person name="Yoshikawa H.-F."/>
            <person name="Zumstein E."/>
            <person name="Yoshikawa H."/>
            <person name="Danchin A."/>
        </authorList>
    </citation>
    <scope>NUCLEOTIDE SEQUENCE [LARGE SCALE GENOMIC DNA]</scope>
    <source>
        <strain>168</strain>
    </source>
</reference>
<reference key="3">
    <citation type="journal article" date="2009" name="Microbiology">
        <title>From a consortium sequence to a unified sequence: the Bacillus subtilis 168 reference genome a decade later.</title>
        <authorList>
            <person name="Barbe V."/>
            <person name="Cruveiller S."/>
            <person name="Kunst F."/>
            <person name="Lenoble P."/>
            <person name="Meurice G."/>
            <person name="Sekowska A."/>
            <person name="Vallenet D."/>
            <person name="Wang T."/>
            <person name="Moszer I."/>
            <person name="Medigue C."/>
            <person name="Danchin A."/>
        </authorList>
    </citation>
    <scope>SEQUENCE REVISION TO 296</scope>
</reference>
<keyword id="KW-1185">Reference proteome</keyword>
<accession>P54325</accession>
<evidence type="ECO:0000305" key="1"/>